<protein>
    <recommendedName>
        <fullName evidence="1">Shikimate kinase</fullName>
        <shortName evidence="1">SK</shortName>
        <ecNumber evidence="1">2.7.1.71</ecNumber>
    </recommendedName>
</protein>
<dbReference type="EC" id="2.7.1.71" evidence="1"/>
<dbReference type="EMBL" id="CP000961">
    <property type="protein sequence ID" value="ACA84641.1"/>
    <property type="molecule type" value="Genomic_DNA"/>
</dbReference>
<dbReference type="RefSeq" id="WP_012322990.1">
    <property type="nucleotide sequence ID" value="NC_010506.1"/>
</dbReference>
<dbReference type="SMR" id="B1KP71"/>
<dbReference type="STRING" id="392500.Swoo_0340"/>
<dbReference type="KEGG" id="swd:Swoo_0340"/>
<dbReference type="eggNOG" id="COG0703">
    <property type="taxonomic scope" value="Bacteria"/>
</dbReference>
<dbReference type="HOGENOM" id="CLU_057607_2_2_6"/>
<dbReference type="UniPathway" id="UPA00053">
    <property type="reaction ID" value="UER00088"/>
</dbReference>
<dbReference type="Proteomes" id="UP000002168">
    <property type="component" value="Chromosome"/>
</dbReference>
<dbReference type="GO" id="GO:0005829">
    <property type="term" value="C:cytosol"/>
    <property type="evidence" value="ECO:0007669"/>
    <property type="project" value="TreeGrafter"/>
</dbReference>
<dbReference type="GO" id="GO:0005524">
    <property type="term" value="F:ATP binding"/>
    <property type="evidence" value="ECO:0007669"/>
    <property type="project" value="UniProtKB-UniRule"/>
</dbReference>
<dbReference type="GO" id="GO:0000287">
    <property type="term" value="F:magnesium ion binding"/>
    <property type="evidence" value="ECO:0007669"/>
    <property type="project" value="UniProtKB-UniRule"/>
</dbReference>
<dbReference type="GO" id="GO:0004765">
    <property type="term" value="F:shikimate kinase activity"/>
    <property type="evidence" value="ECO:0007669"/>
    <property type="project" value="UniProtKB-UniRule"/>
</dbReference>
<dbReference type="GO" id="GO:0008652">
    <property type="term" value="P:amino acid biosynthetic process"/>
    <property type="evidence" value="ECO:0007669"/>
    <property type="project" value="UniProtKB-KW"/>
</dbReference>
<dbReference type="GO" id="GO:0009073">
    <property type="term" value="P:aromatic amino acid family biosynthetic process"/>
    <property type="evidence" value="ECO:0007669"/>
    <property type="project" value="UniProtKB-KW"/>
</dbReference>
<dbReference type="GO" id="GO:0009423">
    <property type="term" value="P:chorismate biosynthetic process"/>
    <property type="evidence" value="ECO:0007669"/>
    <property type="project" value="UniProtKB-UniRule"/>
</dbReference>
<dbReference type="CDD" id="cd00464">
    <property type="entry name" value="SK"/>
    <property type="match status" value="1"/>
</dbReference>
<dbReference type="FunFam" id="3.40.50.300:FF:000099">
    <property type="entry name" value="Shikimate kinase 1"/>
    <property type="match status" value="1"/>
</dbReference>
<dbReference type="Gene3D" id="3.40.50.300">
    <property type="entry name" value="P-loop containing nucleotide triphosphate hydrolases"/>
    <property type="match status" value="1"/>
</dbReference>
<dbReference type="HAMAP" id="MF_00109">
    <property type="entry name" value="Shikimate_kinase"/>
    <property type="match status" value="1"/>
</dbReference>
<dbReference type="InterPro" id="IPR027417">
    <property type="entry name" value="P-loop_NTPase"/>
</dbReference>
<dbReference type="InterPro" id="IPR031322">
    <property type="entry name" value="Shikimate/glucono_kinase"/>
</dbReference>
<dbReference type="InterPro" id="IPR000623">
    <property type="entry name" value="Shikimate_kinase/TSH1"/>
</dbReference>
<dbReference type="InterPro" id="IPR023000">
    <property type="entry name" value="Shikimate_kinase_CS"/>
</dbReference>
<dbReference type="NCBIfam" id="NF003456">
    <property type="entry name" value="PRK05057.1"/>
    <property type="match status" value="1"/>
</dbReference>
<dbReference type="PANTHER" id="PTHR21087">
    <property type="entry name" value="SHIKIMATE KINASE"/>
    <property type="match status" value="1"/>
</dbReference>
<dbReference type="PANTHER" id="PTHR21087:SF16">
    <property type="entry name" value="SHIKIMATE KINASE 1, CHLOROPLASTIC"/>
    <property type="match status" value="1"/>
</dbReference>
<dbReference type="Pfam" id="PF01202">
    <property type="entry name" value="SKI"/>
    <property type="match status" value="1"/>
</dbReference>
<dbReference type="PRINTS" id="PR01100">
    <property type="entry name" value="SHIKIMTKNASE"/>
</dbReference>
<dbReference type="SUPFAM" id="SSF52540">
    <property type="entry name" value="P-loop containing nucleoside triphosphate hydrolases"/>
    <property type="match status" value="1"/>
</dbReference>
<dbReference type="PROSITE" id="PS01128">
    <property type="entry name" value="SHIKIMATE_KINASE"/>
    <property type="match status" value="1"/>
</dbReference>
<organism>
    <name type="scientific">Shewanella woodyi (strain ATCC 51908 / MS32)</name>
    <dbReference type="NCBI Taxonomy" id="392500"/>
    <lineage>
        <taxon>Bacteria</taxon>
        <taxon>Pseudomonadati</taxon>
        <taxon>Pseudomonadota</taxon>
        <taxon>Gammaproteobacteria</taxon>
        <taxon>Alteromonadales</taxon>
        <taxon>Shewanellaceae</taxon>
        <taxon>Shewanella</taxon>
    </lineage>
</organism>
<comment type="function">
    <text evidence="1">Catalyzes the specific phosphorylation of the 3-hydroxyl group of shikimic acid using ATP as a cosubstrate.</text>
</comment>
<comment type="catalytic activity">
    <reaction evidence="1">
        <text>shikimate + ATP = 3-phosphoshikimate + ADP + H(+)</text>
        <dbReference type="Rhea" id="RHEA:13121"/>
        <dbReference type="ChEBI" id="CHEBI:15378"/>
        <dbReference type="ChEBI" id="CHEBI:30616"/>
        <dbReference type="ChEBI" id="CHEBI:36208"/>
        <dbReference type="ChEBI" id="CHEBI:145989"/>
        <dbReference type="ChEBI" id="CHEBI:456216"/>
        <dbReference type="EC" id="2.7.1.71"/>
    </reaction>
</comment>
<comment type="cofactor">
    <cofactor evidence="1">
        <name>Mg(2+)</name>
        <dbReference type="ChEBI" id="CHEBI:18420"/>
    </cofactor>
    <text evidence="1">Binds 1 Mg(2+) ion per subunit.</text>
</comment>
<comment type="pathway">
    <text evidence="1">Metabolic intermediate biosynthesis; chorismate biosynthesis; chorismate from D-erythrose 4-phosphate and phosphoenolpyruvate: step 5/7.</text>
</comment>
<comment type="subunit">
    <text evidence="1">Monomer.</text>
</comment>
<comment type="subcellular location">
    <subcellularLocation>
        <location evidence="1">Cytoplasm</location>
    </subcellularLocation>
</comment>
<comment type="similarity">
    <text evidence="1">Belongs to the shikimate kinase family.</text>
</comment>
<keyword id="KW-0028">Amino-acid biosynthesis</keyword>
<keyword id="KW-0057">Aromatic amino acid biosynthesis</keyword>
<keyword id="KW-0067">ATP-binding</keyword>
<keyword id="KW-0963">Cytoplasm</keyword>
<keyword id="KW-0418">Kinase</keyword>
<keyword id="KW-0460">Magnesium</keyword>
<keyword id="KW-0479">Metal-binding</keyword>
<keyword id="KW-0547">Nucleotide-binding</keyword>
<keyword id="KW-1185">Reference proteome</keyword>
<keyword id="KW-0808">Transferase</keyword>
<sequence>MAEKRNIFLVGPMGAGKSTIGRHLAQMLHLEFHDSDQEIESRTGADIAWVFDVEGEEGFRIRETQVVADLTEKQGIVLATGGGSIQSKEIRNNLSARGIVVYLETTIDKQVARTQRDKRRPLLQVEDPREVLENLAATRNPLYEEIADVIVKTDEQSAKVVANQIIEQLGF</sequence>
<evidence type="ECO:0000255" key="1">
    <source>
        <dbReference type="HAMAP-Rule" id="MF_00109"/>
    </source>
</evidence>
<gene>
    <name evidence="1" type="primary">aroK</name>
    <name type="ordered locus">Swoo_0340</name>
</gene>
<accession>B1KP71</accession>
<feature type="chain" id="PRO_1000094413" description="Shikimate kinase">
    <location>
        <begin position="1"/>
        <end position="171"/>
    </location>
</feature>
<feature type="binding site" evidence="1">
    <location>
        <begin position="14"/>
        <end position="19"/>
    </location>
    <ligand>
        <name>ATP</name>
        <dbReference type="ChEBI" id="CHEBI:30616"/>
    </ligand>
</feature>
<feature type="binding site" evidence="1">
    <location>
        <position position="18"/>
    </location>
    <ligand>
        <name>Mg(2+)</name>
        <dbReference type="ChEBI" id="CHEBI:18420"/>
    </ligand>
</feature>
<feature type="binding site" evidence="1">
    <location>
        <position position="36"/>
    </location>
    <ligand>
        <name>substrate</name>
    </ligand>
</feature>
<feature type="binding site" evidence="1">
    <location>
        <position position="60"/>
    </location>
    <ligand>
        <name>substrate</name>
    </ligand>
</feature>
<feature type="binding site" evidence="1">
    <location>
        <position position="82"/>
    </location>
    <ligand>
        <name>substrate</name>
    </ligand>
</feature>
<feature type="binding site" evidence="1">
    <location>
        <position position="120"/>
    </location>
    <ligand>
        <name>ATP</name>
        <dbReference type="ChEBI" id="CHEBI:30616"/>
    </ligand>
</feature>
<feature type="binding site" evidence="1">
    <location>
        <position position="139"/>
    </location>
    <ligand>
        <name>substrate</name>
    </ligand>
</feature>
<feature type="binding site" evidence="1">
    <location>
        <position position="156"/>
    </location>
    <ligand>
        <name>ATP</name>
        <dbReference type="ChEBI" id="CHEBI:30616"/>
    </ligand>
</feature>
<reference key="1">
    <citation type="submission" date="2008-02" db="EMBL/GenBank/DDBJ databases">
        <title>Complete sequence of Shewanella woodyi ATCC 51908.</title>
        <authorList>
            <consortium name="US DOE Joint Genome Institute"/>
            <person name="Copeland A."/>
            <person name="Lucas S."/>
            <person name="Lapidus A."/>
            <person name="Glavina del Rio T."/>
            <person name="Dalin E."/>
            <person name="Tice H."/>
            <person name="Bruce D."/>
            <person name="Goodwin L."/>
            <person name="Pitluck S."/>
            <person name="Sims D."/>
            <person name="Brettin T."/>
            <person name="Detter J.C."/>
            <person name="Han C."/>
            <person name="Kuske C.R."/>
            <person name="Schmutz J."/>
            <person name="Larimer F."/>
            <person name="Land M."/>
            <person name="Hauser L."/>
            <person name="Kyrpides N."/>
            <person name="Lykidis A."/>
            <person name="Zhao J.-S."/>
            <person name="Richardson P."/>
        </authorList>
    </citation>
    <scope>NUCLEOTIDE SEQUENCE [LARGE SCALE GENOMIC DNA]</scope>
    <source>
        <strain>ATCC 51908 / MS32</strain>
    </source>
</reference>
<proteinExistence type="inferred from homology"/>
<name>AROK_SHEWM</name>